<gene>
    <name type="primary">yaf9</name>
    <name type="ORF">SPAC17G8.07</name>
</gene>
<proteinExistence type="inferred from homology"/>
<evidence type="ECO:0000250" key="1"/>
<evidence type="ECO:0000255" key="2"/>
<evidence type="ECO:0000255" key="3">
    <source>
        <dbReference type="PROSITE-ProRule" id="PRU00376"/>
    </source>
</evidence>
<evidence type="ECO:0000305" key="4"/>
<reference key="1">
    <citation type="journal article" date="2002" name="Nature">
        <title>The genome sequence of Schizosaccharomyces pombe.</title>
        <authorList>
            <person name="Wood V."/>
            <person name="Gwilliam R."/>
            <person name="Rajandream M.A."/>
            <person name="Lyne M.H."/>
            <person name="Lyne R."/>
            <person name="Stewart A."/>
            <person name="Sgouros J.G."/>
            <person name="Peat N."/>
            <person name="Hayles J."/>
            <person name="Baker S.G."/>
            <person name="Basham D."/>
            <person name="Bowman S."/>
            <person name="Brooks K."/>
            <person name="Brown D."/>
            <person name="Brown S."/>
            <person name="Chillingworth T."/>
            <person name="Churcher C.M."/>
            <person name="Collins M."/>
            <person name="Connor R."/>
            <person name="Cronin A."/>
            <person name="Davis P."/>
            <person name="Feltwell T."/>
            <person name="Fraser A."/>
            <person name="Gentles S."/>
            <person name="Goble A."/>
            <person name="Hamlin N."/>
            <person name="Harris D.E."/>
            <person name="Hidalgo J."/>
            <person name="Hodgson G."/>
            <person name="Holroyd S."/>
            <person name="Hornsby T."/>
            <person name="Howarth S."/>
            <person name="Huckle E.J."/>
            <person name="Hunt S."/>
            <person name="Jagels K."/>
            <person name="James K.D."/>
            <person name="Jones L."/>
            <person name="Jones M."/>
            <person name="Leather S."/>
            <person name="McDonald S."/>
            <person name="McLean J."/>
            <person name="Mooney P."/>
            <person name="Moule S."/>
            <person name="Mungall K.L."/>
            <person name="Murphy L.D."/>
            <person name="Niblett D."/>
            <person name="Odell C."/>
            <person name="Oliver K."/>
            <person name="O'Neil S."/>
            <person name="Pearson D."/>
            <person name="Quail M.A."/>
            <person name="Rabbinowitsch E."/>
            <person name="Rutherford K.M."/>
            <person name="Rutter S."/>
            <person name="Saunders D."/>
            <person name="Seeger K."/>
            <person name="Sharp S."/>
            <person name="Skelton J."/>
            <person name="Simmonds M.N."/>
            <person name="Squares R."/>
            <person name="Squares S."/>
            <person name="Stevens K."/>
            <person name="Taylor K."/>
            <person name="Taylor R.G."/>
            <person name="Tivey A."/>
            <person name="Walsh S.V."/>
            <person name="Warren T."/>
            <person name="Whitehead S."/>
            <person name="Woodward J.R."/>
            <person name="Volckaert G."/>
            <person name="Aert R."/>
            <person name="Robben J."/>
            <person name="Grymonprez B."/>
            <person name="Weltjens I."/>
            <person name="Vanstreels E."/>
            <person name="Rieger M."/>
            <person name="Schaefer M."/>
            <person name="Mueller-Auer S."/>
            <person name="Gabel C."/>
            <person name="Fuchs M."/>
            <person name="Duesterhoeft A."/>
            <person name="Fritzc C."/>
            <person name="Holzer E."/>
            <person name="Moestl D."/>
            <person name="Hilbert H."/>
            <person name="Borzym K."/>
            <person name="Langer I."/>
            <person name="Beck A."/>
            <person name="Lehrach H."/>
            <person name="Reinhardt R."/>
            <person name="Pohl T.M."/>
            <person name="Eger P."/>
            <person name="Zimmermann W."/>
            <person name="Wedler H."/>
            <person name="Wambutt R."/>
            <person name="Purnelle B."/>
            <person name="Goffeau A."/>
            <person name="Cadieu E."/>
            <person name="Dreano S."/>
            <person name="Gloux S."/>
            <person name="Lelaure V."/>
            <person name="Mottier S."/>
            <person name="Galibert F."/>
            <person name="Aves S.J."/>
            <person name="Xiang Z."/>
            <person name="Hunt C."/>
            <person name="Moore K."/>
            <person name="Hurst S.M."/>
            <person name="Lucas M."/>
            <person name="Rochet M."/>
            <person name="Gaillardin C."/>
            <person name="Tallada V.A."/>
            <person name="Garzon A."/>
            <person name="Thode G."/>
            <person name="Daga R.R."/>
            <person name="Cruzado L."/>
            <person name="Jimenez J."/>
            <person name="Sanchez M."/>
            <person name="del Rey F."/>
            <person name="Benito J."/>
            <person name="Dominguez A."/>
            <person name="Revuelta J.L."/>
            <person name="Moreno S."/>
            <person name="Armstrong J."/>
            <person name="Forsburg S.L."/>
            <person name="Cerutti L."/>
            <person name="Lowe T."/>
            <person name="McCombie W.R."/>
            <person name="Paulsen I."/>
            <person name="Potashkin J."/>
            <person name="Shpakovski G.V."/>
            <person name="Ussery D."/>
            <person name="Barrell B.G."/>
            <person name="Nurse P."/>
        </authorList>
    </citation>
    <scope>NUCLEOTIDE SEQUENCE [LARGE SCALE GENOMIC DNA]</scope>
    <source>
        <strain>972 / ATCC 24843</strain>
    </source>
</reference>
<protein>
    <recommendedName>
        <fullName>Protein AF-9 homolog</fullName>
    </recommendedName>
</protein>
<dbReference type="EMBL" id="CU329670">
    <property type="protein sequence ID" value="CAA93690.1"/>
    <property type="molecule type" value="Genomic_DNA"/>
</dbReference>
<dbReference type="PIR" id="T37859">
    <property type="entry name" value="T37859"/>
</dbReference>
<dbReference type="RefSeq" id="NP_593730.1">
    <property type="nucleotide sequence ID" value="NM_001019161.2"/>
</dbReference>
<dbReference type="SMR" id="Q10319"/>
<dbReference type="BioGRID" id="278747">
    <property type="interactions" value="107"/>
</dbReference>
<dbReference type="FunCoup" id="Q10319">
    <property type="interactions" value="457"/>
</dbReference>
<dbReference type="IntAct" id="Q10319">
    <property type="interactions" value="1"/>
</dbReference>
<dbReference type="MINT" id="Q10319"/>
<dbReference type="STRING" id="284812.Q10319"/>
<dbReference type="iPTMnet" id="Q10319"/>
<dbReference type="PaxDb" id="4896-SPAC17G8.07.1"/>
<dbReference type="EnsemblFungi" id="SPAC17G8.07.1">
    <property type="protein sequence ID" value="SPAC17G8.07.1:pep"/>
    <property type="gene ID" value="SPAC17G8.07"/>
</dbReference>
<dbReference type="GeneID" id="2542278"/>
<dbReference type="KEGG" id="spo:2542278"/>
<dbReference type="PomBase" id="SPAC17G8.07">
    <property type="gene designation" value="yaf9"/>
</dbReference>
<dbReference type="VEuPathDB" id="FungiDB:SPAC17G8.07"/>
<dbReference type="eggNOG" id="KOG3149">
    <property type="taxonomic scope" value="Eukaryota"/>
</dbReference>
<dbReference type="HOGENOM" id="CLU_051385_2_1_1"/>
<dbReference type="InParanoid" id="Q10319"/>
<dbReference type="OMA" id="VKPYHNE"/>
<dbReference type="PhylomeDB" id="Q10319"/>
<dbReference type="PRO" id="PR:Q10319"/>
<dbReference type="Proteomes" id="UP000002485">
    <property type="component" value="Chromosome I"/>
</dbReference>
<dbReference type="GO" id="GO:0005829">
    <property type="term" value="C:cytosol"/>
    <property type="evidence" value="ECO:0007005"/>
    <property type="project" value="PomBase"/>
</dbReference>
<dbReference type="GO" id="GO:0035267">
    <property type="term" value="C:NuA4 histone acetyltransferase complex"/>
    <property type="evidence" value="ECO:0000314"/>
    <property type="project" value="PomBase"/>
</dbReference>
<dbReference type="GO" id="GO:0005634">
    <property type="term" value="C:nucleus"/>
    <property type="evidence" value="ECO:0007005"/>
    <property type="project" value="PomBase"/>
</dbReference>
<dbReference type="GO" id="GO:0000812">
    <property type="term" value="C:Swr1 complex"/>
    <property type="evidence" value="ECO:0000314"/>
    <property type="project" value="PomBase"/>
</dbReference>
<dbReference type="GO" id="GO:0042393">
    <property type="term" value="F:histone binding"/>
    <property type="evidence" value="ECO:0000318"/>
    <property type="project" value="GO_Central"/>
</dbReference>
<dbReference type="GO" id="GO:0006338">
    <property type="term" value="P:chromatin remodeling"/>
    <property type="evidence" value="ECO:0000318"/>
    <property type="project" value="GO_Central"/>
</dbReference>
<dbReference type="GO" id="GO:0006281">
    <property type="term" value="P:DNA repair"/>
    <property type="evidence" value="ECO:0007669"/>
    <property type="project" value="UniProtKB-KW"/>
</dbReference>
<dbReference type="GO" id="GO:0140861">
    <property type="term" value="P:DNA repair-dependent chromatin remodeling"/>
    <property type="evidence" value="ECO:0000305"/>
    <property type="project" value="PomBase"/>
</dbReference>
<dbReference type="GO" id="GO:0006357">
    <property type="term" value="P:regulation of transcription by RNA polymerase II"/>
    <property type="evidence" value="ECO:0000318"/>
    <property type="project" value="GO_Central"/>
</dbReference>
<dbReference type="GO" id="GO:0045815">
    <property type="term" value="P:transcription initiation-coupled chromatin remodeling"/>
    <property type="evidence" value="ECO:0000305"/>
    <property type="project" value="PomBase"/>
</dbReference>
<dbReference type="CDD" id="cd16908">
    <property type="entry name" value="YEATS_Yaf9_like"/>
    <property type="match status" value="1"/>
</dbReference>
<dbReference type="Gene3D" id="2.60.40.1970">
    <property type="entry name" value="YEATS domain"/>
    <property type="match status" value="1"/>
</dbReference>
<dbReference type="InterPro" id="IPR038704">
    <property type="entry name" value="YEAST_sf"/>
</dbReference>
<dbReference type="InterPro" id="IPR005033">
    <property type="entry name" value="YEATS"/>
</dbReference>
<dbReference type="InterPro" id="IPR055129">
    <property type="entry name" value="YEATS_dom"/>
</dbReference>
<dbReference type="PANTHER" id="PTHR47573">
    <property type="entry name" value="PROTEIN AF-9 HOMOLOG"/>
    <property type="match status" value="1"/>
</dbReference>
<dbReference type="PANTHER" id="PTHR47573:SF1">
    <property type="entry name" value="PROTEIN AF-9 HOMOLOG"/>
    <property type="match status" value="1"/>
</dbReference>
<dbReference type="Pfam" id="PF03366">
    <property type="entry name" value="YEATS"/>
    <property type="match status" value="1"/>
</dbReference>
<dbReference type="PROSITE" id="PS51037">
    <property type="entry name" value="YEATS"/>
    <property type="match status" value="1"/>
</dbReference>
<accession>Q10319</accession>
<feature type="chain" id="PRO_0000215931" description="Protein AF-9 homolog">
    <location>
        <begin position="1"/>
        <end position="217"/>
    </location>
</feature>
<feature type="domain" description="YEATS" evidence="3">
    <location>
        <begin position="6"/>
        <end position="156"/>
    </location>
</feature>
<feature type="coiled-coil region" evidence="2">
    <location>
        <begin position="180"/>
        <end position="214"/>
    </location>
</feature>
<keyword id="KW-0010">Activator</keyword>
<keyword id="KW-0156">Chromatin regulator</keyword>
<keyword id="KW-0175">Coiled coil</keyword>
<keyword id="KW-0963">Cytoplasm</keyword>
<keyword id="KW-0227">DNA damage</keyword>
<keyword id="KW-0234">DNA repair</keyword>
<keyword id="KW-0539">Nucleus</keyword>
<keyword id="KW-1185">Reference proteome</keyword>
<keyword id="KW-0804">Transcription</keyword>
<keyword id="KW-0805">Transcription regulation</keyword>
<organism>
    <name type="scientific">Schizosaccharomyces pombe (strain 972 / ATCC 24843)</name>
    <name type="common">Fission yeast</name>
    <dbReference type="NCBI Taxonomy" id="284812"/>
    <lineage>
        <taxon>Eukaryota</taxon>
        <taxon>Fungi</taxon>
        <taxon>Dikarya</taxon>
        <taxon>Ascomycota</taxon>
        <taxon>Taphrinomycotina</taxon>
        <taxon>Schizosaccharomycetes</taxon>
        <taxon>Schizosaccharomycetales</taxon>
        <taxon>Schizosaccharomycetaceae</taxon>
        <taxon>Schizosaccharomyces</taxon>
    </lineage>
</organism>
<comment type="function">
    <text evidence="1">Component of the SWR1 complex which mediates the ATP-dependent exchange of histone H2A for the H2A variant HZT1 leading to transcriptional regulation of selected genes by chromatin remodeling. Component of the NuA4 histone acetyltransferase complex which is involved in transcriptional activation of selected genes principally by acetylation of nucleosomal histones H4 and H2A. The NuA4 complex is also involved in DNA repair. Yaf9 may also be required for viability in conditions in which the structural integrity of the spindle is compromised (By similarity).</text>
</comment>
<comment type="subunit">
    <text evidence="1">Component of the SWR1 chromatin-remodeling complex and of the NuA4 histone acetyltransferase complex.</text>
</comment>
<comment type="subcellular location">
    <subcellularLocation>
        <location evidence="1">Cytoplasm</location>
    </subcellularLocation>
    <subcellularLocation>
        <location evidence="3">Nucleus</location>
    </subcellularLocation>
</comment>
<comment type="domain">
    <text evidence="1">The coiled-coil domain is required for assembly into the NuA4 complex.</text>
</comment>
<comment type="similarity">
    <text evidence="4">Belongs to the YAF9 family.</text>
</comment>
<sequence length="217" mass="24946">MAPNTRVSKCQISRPILVGNDAKPLTKEEKEKAPTDHTHTWRIFVEGVDGEDISKWVRKVVFKLHDTYNNPTRTIESPPFEVIETGWGEFDIMVRIFFAPEAHEKALTFYHHLKLHPYGPRMEEMKASGGLVESVQYEEIVFNEPFEYTYKLLSQNPIGDGHGLAVESEPDHPFSQQLEQDEADKLDFAIQEVKKTIEMYKQQVQSLQGQKSSTPVE</sequence>
<name>AF9_SCHPO</name>